<accession>A9BXV6</accession>
<protein>
    <recommendedName>
        <fullName evidence="1">tRNA-cytidine(32) 2-sulfurtransferase</fullName>
        <ecNumber evidence="1">2.8.1.-</ecNumber>
    </recommendedName>
    <alternativeName>
        <fullName evidence="1">Two-thiocytidine biosynthesis protein A</fullName>
    </alternativeName>
    <alternativeName>
        <fullName evidence="1">tRNA 2-thiocytidine biosynthesis protein TtcA</fullName>
    </alternativeName>
</protein>
<feature type="chain" id="PRO_0000348711" description="tRNA-cytidine(32) 2-sulfurtransferase">
    <location>
        <begin position="1"/>
        <end position="313"/>
    </location>
</feature>
<feature type="short sequence motif" description="PP-loop motif" evidence="1">
    <location>
        <begin position="60"/>
        <end position="65"/>
    </location>
</feature>
<feature type="binding site" evidence="1">
    <location>
        <position position="135"/>
    </location>
    <ligand>
        <name>[4Fe-4S] cluster</name>
        <dbReference type="ChEBI" id="CHEBI:49883"/>
    </ligand>
</feature>
<feature type="binding site" evidence="1">
    <location>
        <position position="138"/>
    </location>
    <ligand>
        <name>[4Fe-4S] cluster</name>
        <dbReference type="ChEBI" id="CHEBI:49883"/>
    </ligand>
</feature>
<feature type="binding site" evidence="1">
    <location>
        <position position="226"/>
    </location>
    <ligand>
        <name>[4Fe-4S] cluster</name>
        <dbReference type="ChEBI" id="CHEBI:49883"/>
    </ligand>
</feature>
<evidence type="ECO:0000255" key="1">
    <source>
        <dbReference type="HAMAP-Rule" id="MF_01850"/>
    </source>
</evidence>
<sequence>MFNNPDFSDIATCDLEEPKNSIKIEREQVKLEKRLCREVGRAITDFNMIEEGDKIMVCMSGGKDSYTMLDVLRKLQKRAPVKFELVAVNLDQKQPGFPDHVLPEYFKSIGVDYHIETQDTYSVVKRVVPEGKTTCGLCSRLRRAILYKVADELGCTKVALGHHRDDIVQTLMLNMFYGGRMKGMPPKLVSDDGKHVVIRPLCYVPEKDTVRWAQYQNFPIIPCNLCGSQDGLQRVAVGELLREWDKKFPGRVESMFRAMGHIVTTHMMDPELHDFKNAKATGIADPNGDMAFDHEEMPVSASLPGLQVVQLSS</sequence>
<comment type="function">
    <text evidence="1">Catalyzes the ATP-dependent 2-thiolation of cytidine in position 32 of tRNA, to form 2-thiocytidine (s(2)C32). The sulfur atoms are provided by the cysteine/cysteine desulfurase (IscS) system.</text>
</comment>
<comment type="catalytic activity">
    <reaction evidence="1">
        <text>cytidine(32) in tRNA + S-sulfanyl-L-cysteinyl-[cysteine desulfurase] + AH2 + ATP = 2-thiocytidine(32) in tRNA + L-cysteinyl-[cysteine desulfurase] + A + AMP + diphosphate + H(+)</text>
        <dbReference type="Rhea" id="RHEA:57048"/>
        <dbReference type="Rhea" id="RHEA-COMP:10288"/>
        <dbReference type="Rhea" id="RHEA-COMP:12157"/>
        <dbReference type="Rhea" id="RHEA-COMP:12158"/>
        <dbReference type="Rhea" id="RHEA-COMP:14821"/>
        <dbReference type="ChEBI" id="CHEBI:13193"/>
        <dbReference type="ChEBI" id="CHEBI:15378"/>
        <dbReference type="ChEBI" id="CHEBI:17499"/>
        <dbReference type="ChEBI" id="CHEBI:29950"/>
        <dbReference type="ChEBI" id="CHEBI:30616"/>
        <dbReference type="ChEBI" id="CHEBI:33019"/>
        <dbReference type="ChEBI" id="CHEBI:61963"/>
        <dbReference type="ChEBI" id="CHEBI:82748"/>
        <dbReference type="ChEBI" id="CHEBI:141453"/>
        <dbReference type="ChEBI" id="CHEBI:456215"/>
    </reaction>
    <physiologicalReaction direction="left-to-right" evidence="1">
        <dbReference type="Rhea" id="RHEA:57049"/>
    </physiologicalReaction>
</comment>
<comment type="cofactor">
    <cofactor evidence="1">
        <name>Mg(2+)</name>
        <dbReference type="ChEBI" id="CHEBI:18420"/>
    </cofactor>
</comment>
<comment type="cofactor">
    <cofactor evidence="1">
        <name>[4Fe-4S] cluster</name>
        <dbReference type="ChEBI" id="CHEBI:49883"/>
    </cofactor>
    <text evidence="1">Binds 1 [4Fe-4S] cluster per subunit. The cluster is chelated by three Cys residues, the fourth Fe has a free coordination site that may bind a sulfur atom transferred from the persulfide of IscS.</text>
</comment>
<comment type="pathway">
    <text evidence="1">tRNA modification.</text>
</comment>
<comment type="subunit">
    <text evidence="1">Homodimer.</text>
</comment>
<comment type="subcellular location">
    <subcellularLocation>
        <location evidence="1">Cytoplasm</location>
    </subcellularLocation>
</comment>
<comment type="miscellaneous">
    <text evidence="1">The thiolation reaction likely consists of two steps: a first activation step by ATP to form an adenylated intermediate of the target base of tRNA, and a second nucleophilic substitution step of the sulfur (S) atom supplied by the hydrosulfide attached to the Fe-S cluster.</text>
</comment>
<comment type="similarity">
    <text evidence="1">Belongs to the TtcA family.</text>
</comment>
<dbReference type="EC" id="2.8.1.-" evidence="1"/>
<dbReference type="EMBL" id="CP000884">
    <property type="protein sequence ID" value="ABX33891.1"/>
    <property type="molecule type" value="Genomic_DNA"/>
</dbReference>
<dbReference type="RefSeq" id="WP_012203177.1">
    <property type="nucleotide sequence ID" value="NC_010002.1"/>
</dbReference>
<dbReference type="SMR" id="A9BXV6"/>
<dbReference type="STRING" id="398578.Daci_1247"/>
<dbReference type="GeneID" id="24118636"/>
<dbReference type="KEGG" id="dac:Daci_1247"/>
<dbReference type="eggNOG" id="COG0037">
    <property type="taxonomic scope" value="Bacteria"/>
</dbReference>
<dbReference type="HOGENOM" id="CLU_026481_0_0_4"/>
<dbReference type="Proteomes" id="UP000000784">
    <property type="component" value="Chromosome"/>
</dbReference>
<dbReference type="GO" id="GO:0005737">
    <property type="term" value="C:cytoplasm"/>
    <property type="evidence" value="ECO:0007669"/>
    <property type="project" value="UniProtKB-SubCell"/>
</dbReference>
<dbReference type="GO" id="GO:0051539">
    <property type="term" value="F:4 iron, 4 sulfur cluster binding"/>
    <property type="evidence" value="ECO:0007669"/>
    <property type="project" value="UniProtKB-UniRule"/>
</dbReference>
<dbReference type="GO" id="GO:0005524">
    <property type="term" value="F:ATP binding"/>
    <property type="evidence" value="ECO:0007669"/>
    <property type="project" value="UniProtKB-UniRule"/>
</dbReference>
<dbReference type="GO" id="GO:0000287">
    <property type="term" value="F:magnesium ion binding"/>
    <property type="evidence" value="ECO:0007669"/>
    <property type="project" value="UniProtKB-UniRule"/>
</dbReference>
<dbReference type="GO" id="GO:0016783">
    <property type="term" value="F:sulfurtransferase activity"/>
    <property type="evidence" value="ECO:0007669"/>
    <property type="project" value="UniProtKB-UniRule"/>
</dbReference>
<dbReference type="GO" id="GO:0000049">
    <property type="term" value="F:tRNA binding"/>
    <property type="evidence" value="ECO:0007669"/>
    <property type="project" value="UniProtKB-KW"/>
</dbReference>
<dbReference type="GO" id="GO:0034227">
    <property type="term" value="P:tRNA thio-modification"/>
    <property type="evidence" value="ECO:0007669"/>
    <property type="project" value="UniProtKB-UniRule"/>
</dbReference>
<dbReference type="CDD" id="cd24138">
    <property type="entry name" value="TtcA-like"/>
    <property type="match status" value="1"/>
</dbReference>
<dbReference type="Gene3D" id="3.40.50.620">
    <property type="entry name" value="HUPs"/>
    <property type="match status" value="1"/>
</dbReference>
<dbReference type="HAMAP" id="MF_01850">
    <property type="entry name" value="TtcA"/>
    <property type="match status" value="1"/>
</dbReference>
<dbReference type="InterPro" id="IPR014729">
    <property type="entry name" value="Rossmann-like_a/b/a_fold"/>
</dbReference>
<dbReference type="InterPro" id="IPR011063">
    <property type="entry name" value="TilS/TtcA_N"/>
</dbReference>
<dbReference type="InterPro" id="IPR012089">
    <property type="entry name" value="tRNA_Cyd_32_2_STrfase"/>
</dbReference>
<dbReference type="InterPro" id="IPR035107">
    <property type="entry name" value="tRNA_thiolation_TtcA_Ctu1"/>
</dbReference>
<dbReference type="NCBIfam" id="NF007972">
    <property type="entry name" value="PRK10696.1"/>
    <property type="match status" value="1"/>
</dbReference>
<dbReference type="PANTHER" id="PTHR43686:SF1">
    <property type="entry name" value="AMINOTRAN_5 DOMAIN-CONTAINING PROTEIN"/>
    <property type="match status" value="1"/>
</dbReference>
<dbReference type="PANTHER" id="PTHR43686">
    <property type="entry name" value="SULFURTRANSFERASE-RELATED"/>
    <property type="match status" value="1"/>
</dbReference>
<dbReference type="Pfam" id="PF01171">
    <property type="entry name" value="ATP_bind_3"/>
    <property type="match status" value="1"/>
</dbReference>
<dbReference type="PIRSF" id="PIRSF004976">
    <property type="entry name" value="ATPase_YdaO"/>
    <property type="match status" value="1"/>
</dbReference>
<dbReference type="SUPFAM" id="SSF52402">
    <property type="entry name" value="Adenine nucleotide alpha hydrolases-like"/>
    <property type="match status" value="1"/>
</dbReference>
<gene>
    <name evidence="1" type="primary">ttcA</name>
    <name type="ordered locus">Daci_1247</name>
</gene>
<reference key="1">
    <citation type="submission" date="2007-11" db="EMBL/GenBank/DDBJ databases">
        <title>Complete sequence of Delftia acidovorans DSM 14801 / SPH-1.</title>
        <authorList>
            <person name="Copeland A."/>
            <person name="Lucas S."/>
            <person name="Lapidus A."/>
            <person name="Barry K."/>
            <person name="Glavina del Rio T."/>
            <person name="Dalin E."/>
            <person name="Tice H."/>
            <person name="Pitluck S."/>
            <person name="Lowry S."/>
            <person name="Clum A."/>
            <person name="Schmutz J."/>
            <person name="Larimer F."/>
            <person name="Land M."/>
            <person name="Hauser L."/>
            <person name="Kyrpides N."/>
            <person name="Kim E."/>
            <person name="Schleheck D."/>
            <person name="Richardson P."/>
        </authorList>
    </citation>
    <scope>NUCLEOTIDE SEQUENCE [LARGE SCALE GENOMIC DNA]</scope>
    <source>
        <strain>DSM 14801 / SPH-1</strain>
    </source>
</reference>
<name>TTCA_DELAS</name>
<organism>
    <name type="scientific">Delftia acidovorans (strain DSM 14801 / SPH-1)</name>
    <dbReference type="NCBI Taxonomy" id="398578"/>
    <lineage>
        <taxon>Bacteria</taxon>
        <taxon>Pseudomonadati</taxon>
        <taxon>Pseudomonadota</taxon>
        <taxon>Betaproteobacteria</taxon>
        <taxon>Burkholderiales</taxon>
        <taxon>Comamonadaceae</taxon>
        <taxon>Delftia</taxon>
    </lineage>
</organism>
<proteinExistence type="inferred from homology"/>
<keyword id="KW-0004">4Fe-4S</keyword>
<keyword id="KW-0067">ATP-binding</keyword>
<keyword id="KW-0963">Cytoplasm</keyword>
<keyword id="KW-0408">Iron</keyword>
<keyword id="KW-0411">Iron-sulfur</keyword>
<keyword id="KW-0460">Magnesium</keyword>
<keyword id="KW-0479">Metal-binding</keyword>
<keyword id="KW-0547">Nucleotide-binding</keyword>
<keyword id="KW-1185">Reference proteome</keyword>
<keyword id="KW-0694">RNA-binding</keyword>
<keyword id="KW-0808">Transferase</keyword>
<keyword id="KW-0819">tRNA processing</keyword>
<keyword id="KW-0820">tRNA-binding</keyword>